<dbReference type="EC" id="2.3.1.16" evidence="1"/>
<dbReference type="EMBL" id="BA000031">
    <property type="protein sequence ID" value="BAC60472.1"/>
    <property type="molecule type" value="Genomic_DNA"/>
</dbReference>
<dbReference type="RefSeq" id="NP_798588.1">
    <property type="nucleotide sequence ID" value="NC_004603.1"/>
</dbReference>
<dbReference type="RefSeq" id="WP_005457699.1">
    <property type="nucleotide sequence ID" value="NC_004603.1"/>
</dbReference>
<dbReference type="SMR" id="Q87MM2"/>
<dbReference type="GeneID" id="1189722"/>
<dbReference type="KEGG" id="vpa:VP2209"/>
<dbReference type="PATRIC" id="fig|223926.6.peg.2112"/>
<dbReference type="eggNOG" id="COG0183">
    <property type="taxonomic scope" value="Bacteria"/>
</dbReference>
<dbReference type="HOGENOM" id="CLU_031026_2_0_6"/>
<dbReference type="UniPathway" id="UPA00659"/>
<dbReference type="Proteomes" id="UP000002493">
    <property type="component" value="Chromosome 1"/>
</dbReference>
<dbReference type="GO" id="GO:0005829">
    <property type="term" value="C:cytosol"/>
    <property type="evidence" value="ECO:0007669"/>
    <property type="project" value="TreeGrafter"/>
</dbReference>
<dbReference type="GO" id="GO:0003988">
    <property type="term" value="F:acetyl-CoA C-acyltransferase activity"/>
    <property type="evidence" value="ECO:0007669"/>
    <property type="project" value="UniProtKB-UniRule"/>
</dbReference>
<dbReference type="GO" id="GO:0006635">
    <property type="term" value="P:fatty acid beta-oxidation"/>
    <property type="evidence" value="ECO:0007669"/>
    <property type="project" value="UniProtKB-UniRule"/>
</dbReference>
<dbReference type="CDD" id="cd00751">
    <property type="entry name" value="thiolase"/>
    <property type="match status" value="1"/>
</dbReference>
<dbReference type="FunFam" id="3.40.47.10:FF:000011">
    <property type="entry name" value="3-ketoacyl-CoA thiolase"/>
    <property type="match status" value="1"/>
</dbReference>
<dbReference type="Gene3D" id="3.40.47.10">
    <property type="match status" value="1"/>
</dbReference>
<dbReference type="HAMAP" id="MF_01618">
    <property type="entry name" value="FadI"/>
    <property type="match status" value="1"/>
</dbReference>
<dbReference type="InterPro" id="IPR012806">
    <property type="entry name" value="Ac-CoA_C-AcTrfase_FadI"/>
</dbReference>
<dbReference type="InterPro" id="IPR002155">
    <property type="entry name" value="Thiolase"/>
</dbReference>
<dbReference type="InterPro" id="IPR016039">
    <property type="entry name" value="Thiolase-like"/>
</dbReference>
<dbReference type="InterPro" id="IPR020617">
    <property type="entry name" value="Thiolase_C"/>
</dbReference>
<dbReference type="InterPro" id="IPR020613">
    <property type="entry name" value="Thiolase_CS"/>
</dbReference>
<dbReference type="InterPro" id="IPR020616">
    <property type="entry name" value="Thiolase_N"/>
</dbReference>
<dbReference type="NCBIfam" id="TIGR01930">
    <property type="entry name" value="AcCoA-C-Actrans"/>
    <property type="match status" value="1"/>
</dbReference>
<dbReference type="NCBIfam" id="TIGR02446">
    <property type="entry name" value="FadI"/>
    <property type="match status" value="1"/>
</dbReference>
<dbReference type="NCBIfam" id="NF006516">
    <property type="entry name" value="PRK08963.1"/>
    <property type="match status" value="1"/>
</dbReference>
<dbReference type="PANTHER" id="PTHR18919:SF107">
    <property type="entry name" value="ACETYL-COA ACETYLTRANSFERASE, CYTOSOLIC"/>
    <property type="match status" value="1"/>
</dbReference>
<dbReference type="PANTHER" id="PTHR18919">
    <property type="entry name" value="ACETYL-COA C-ACYLTRANSFERASE"/>
    <property type="match status" value="1"/>
</dbReference>
<dbReference type="Pfam" id="PF02803">
    <property type="entry name" value="Thiolase_C"/>
    <property type="match status" value="1"/>
</dbReference>
<dbReference type="Pfam" id="PF00108">
    <property type="entry name" value="Thiolase_N"/>
    <property type="match status" value="1"/>
</dbReference>
<dbReference type="PIRSF" id="PIRSF000429">
    <property type="entry name" value="Ac-CoA_Ac_transf"/>
    <property type="match status" value="1"/>
</dbReference>
<dbReference type="SUPFAM" id="SSF53901">
    <property type="entry name" value="Thiolase-like"/>
    <property type="match status" value="2"/>
</dbReference>
<dbReference type="PROSITE" id="PS00737">
    <property type="entry name" value="THIOLASE_2"/>
    <property type="match status" value="1"/>
</dbReference>
<comment type="function">
    <text evidence="1">Catalyzes the final step of fatty acid oxidation in which acetyl-CoA is released and the CoA ester of a fatty acid two carbons shorter is formed.</text>
</comment>
<comment type="catalytic activity">
    <reaction evidence="1">
        <text>an acyl-CoA + acetyl-CoA = a 3-oxoacyl-CoA + CoA</text>
        <dbReference type="Rhea" id="RHEA:21564"/>
        <dbReference type="ChEBI" id="CHEBI:57287"/>
        <dbReference type="ChEBI" id="CHEBI:57288"/>
        <dbReference type="ChEBI" id="CHEBI:58342"/>
        <dbReference type="ChEBI" id="CHEBI:90726"/>
        <dbReference type="EC" id="2.3.1.16"/>
    </reaction>
</comment>
<comment type="pathway">
    <text evidence="1">Lipid metabolism; fatty acid beta-oxidation.</text>
</comment>
<comment type="subunit">
    <text evidence="1">Heterotetramer of two alpha chains (FadJ) and two beta chains (FadI).</text>
</comment>
<comment type="subcellular location">
    <subcellularLocation>
        <location evidence="1">Cytoplasm</location>
    </subcellularLocation>
</comment>
<comment type="similarity">
    <text evidence="1">Belongs to the thiolase-like superfamily. Thiolase family.</text>
</comment>
<proteinExistence type="inferred from homology"/>
<protein>
    <recommendedName>
        <fullName evidence="1">3-ketoacyl-CoA thiolase</fullName>
        <ecNumber evidence="1">2.3.1.16</ecNumber>
    </recommendedName>
    <alternativeName>
        <fullName evidence="1">ACSs</fullName>
    </alternativeName>
    <alternativeName>
        <fullName evidence="1">Acetyl-CoA acyltransferase</fullName>
    </alternativeName>
    <alternativeName>
        <fullName evidence="1">Acyl-CoA ligase</fullName>
    </alternativeName>
    <alternativeName>
        <fullName evidence="1">Beta-ketothiolase</fullName>
    </alternativeName>
    <alternativeName>
        <fullName evidence="1">Fatty acid oxidation complex subunit beta</fullName>
    </alternativeName>
</protein>
<reference key="1">
    <citation type="journal article" date="2003" name="Lancet">
        <title>Genome sequence of Vibrio parahaemolyticus: a pathogenic mechanism distinct from that of V. cholerae.</title>
        <authorList>
            <person name="Makino K."/>
            <person name="Oshima K."/>
            <person name="Kurokawa K."/>
            <person name="Yokoyama K."/>
            <person name="Uda T."/>
            <person name="Tagomori K."/>
            <person name="Iijima Y."/>
            <person name="Najima M."/>
            <person name="Nakano M."/>
            <person name="Yamashita A."/>
            <person name="Kubota Y."/>
            <person name="Kimura S."/>
            <person name="Yasunaga T."/>
            <person name="Honda T."/>
            <person name="Shinagawa H."/>
            <person name="Hattori M."/>
            <person name="Iida T."/>
        </authorList>
    </citation>
    <scope>NUCLEOTIDE SEQUENCE [LARGE SCALE GENOMIC DNA]</scope>
    <source>
        <strain>RIMD 2210633</strain>
    </source>
</reference>
<name>FADI_VIBPA</name>
<sequence length="435" mass="46362">MGKQEVKTRNGERVAIVAGLRTPFARQSTEFSQVPAVDLGKMVVSEMLARTDIDPKLIEQVVFGQVVQMPEAPNIAREIVLGTGMNIHTDAYSVTRACATSFQAAVNVAESIMAGTIEIGIAGGADSSSVLPIGVSKKLAANLLALSKTKTLGQKLNILKSLSFKDLMPVPPAVAEYSTGLSMGQTAEQMAKTHGISRAEQDALAHRSHTLASQAWKEGKIQGEVMTAFPEPYKKWISEDNNVRHDSTLEGYAKLRPAFDRQYGSVTAANSTPLTDGGAAVMLMREGKAKELGMEILGYIRGYAFSAIGVEKDMLMGPTYATAKVLENTGLELSDLTLIDMHEAFAAQALANVKMFASDKFAQENLGRSKAIGEIDMDKFNVLGGSIAYGHPFAATGARMMTQTLRELKRRGGGIALNTACAAGGLGAAMILEVE</sequence>
<accession>Q87MM2</accession>
<organism>
    <name type="scientific">Vibrio parahaemolyticus serotype O3:K6 (strain RIMD 2210633)</name>
    <dbReference type="NCBI Taxonomy" id="223926"/>
    <lineage>
        <taxon>Bacteria</taxon>
        <taxon>Pseudomonadati</taxon>
        <taxon>Pseudomonadota</taxon>
        <taxon>Gammaproteobacteria</taxon>
        <taxon>Vibrionales</taxon>
        <taxon>Vibrionaceae</taxon>
        <taxon>Vibrio</taxon>
    </lineage>
</organism>
<gene>
    <name evidence="1" type="primary">fadI</name>
    <name type="ordered locus">VP2209</name>
</gene>
<feature type="chain" id="PRO_0000206451" description="3-ketoacyl-CoA thiolase">
    <location>
        <begin position="1"/>
        <end position="435"/>
    </location>
</feature>
<feature type="active site" description="Acyl-thioester intermediate" evidence="1">
    <location>
        <position position="98"/>
    </location>
</feature>
<feature type="active site" description="Proton acceptor" evidence="1">
    <location>
        <position position="391"/>
    </location>
</feature>
<feature type="active site" description="Proton acceptor" evidence="1">
    <location>
        <position position="421"/>
    </location>
</feature>
<keyword id="KW-0012">Acyltransferase</keyword>
<keyword id="KW-0963">Cytoplasm</keyword>
<keyword id="KW-0276">Fatty acid metabolism</keyword>
<keyword id="KW-0442">Lipid degradation</keyword>
<keyword id="KW-0443">Lipid metabolism</keyword>
<keyword id="KW-0808">Transferase</keyword>
<evidence type="ECO:0000255" key="1">
    <source>
        <dbReference type="HAMAP-Rule" id="MF_01618"/>
    </source>
</evidence>